<reference key="1">
    <citation type="journal article" date="2007" name="Appl. Environ. Microbiol.">
        <title>Genome sequence of the cellulolytic gliding bacterium Cytophaga hutchinsonii.</title>
        <authorList>
            <person name="Xie G."/>
            <person name="Bruce D.C."/>
            <person name="Challacombe J.F."/>
            <person name="Chertkov O."/>
            <person name="Detter J.C."/>
            <person name="Gilna P."/>
            <person name="Han C.S."/>
            <person name="Lucas S."/>
            <person name="Misra M."/>
            <person name="Myers G.L."/>
            <person name="Richardson P."/>
            <person name="Tapia R."/>
            <person name="Thayer N."/>
            <person name="Thompson L.S."/>
            <person name="Brettin T.S."/>
            <person name="Henrissat B."/>
            <person name="Wilson D.B."/>
            <person name="McBride M.J."/>
        </authorList>
    </citation>
    <scope>NUCLEOTIDE SEQUENCE [LARGE SCALE GENOMIC DNA]</scope>
    <source>
        <strain>ATCC 33406 / DSM 1761 / JCM 20678 / CIP 103989 / IAM 12607 / NBRC 15051 / NCIMB 9469 / D465</strain>
    </source>
</reference>
<evidence type="ECO:0000255" key="1">
    <source>
        <dbReference type="HAMAP-Rule" id="MF_00034"/>
    </source>
</evidence>
<name>RUVC_CYTH3</name>
<accession>Q11T17</accession>
<comment type="function">
    <text evidence="1">The RuvA-RuvB-RuvC complex processes Holliday junction (HJ) DNA during genetic recombination and DNA repair. Endonuclease that resolves HJ intermediates. Cleaves cruciform DNA by making single-stranded nicks across the HJ at symmetrical positions within the homologous arms, yielding a 5'-phosphate and a 3'-hydroxyl group; requires a central core of homology in the junction. The consensus cleavage sequence is 5'-(A/T)TT(C/G)-3'. Cleavage occurs on the 3'-side of the TT dinucleotide at the point of strand exchange. HJ branch migration catalyzed by RuvA-RuvB allows RuvC to scan DNA until it finds its consensus sequence, where it cleaves and resolves the cruciform DNA.</text>
</comment>
<comment type="catalytic activity">
    <reaction evidence="1">
        <text>Endonucleolytic cleavage at a junction such as a reciprocal single-stranded crossover between two homologous DNA duplexes (Holliday junction).</text>
        <dbReference type="EC" id="3.1.21.10"/>
    </reaction>
</comment>
<comment type="cofactor">
    <cofactor evidence="1">
        <name>Mg(2+)</name>
        <dbReference type="ChEBI" id="CHEBI:18420"/>
    </cofactor>
    <text evidence="1">Binds 2 Mg(2+) ion per subunit.</text>
</comment>
<comment type="subunit">
    <text evidence="1">Homodimer which binds Holliday junction (HJ) DNA. The HJ becomes 2-fold symmetrical on binding to RuvC with unstacked arms; it has a different conformation from HJ DNA in complex with RuvA. In the full resolvosome a probable DNA-RuvA(4)-RuvB(12)-RuvC(2) complex forms which resolves the HJ.</text>
</comment>
<comment type="subcellular location">
    <subcellularLocation>
        <location evidence="1">Cytoplasm</location>
    </subcellularLocation>
</comment>
<comment type="similarity">
    <text evidence="1">Belongs to the RuvC family.</text>
</comment>
<proteinExistence type="inferred from homology"/>
<gene>
    <name evidence="1" type="primary">ruvC</name>
    <name type="ordered locus">CHU_2183</name>
</gene>
<sequence>MVNKNSPKTIDRIILGVDPGTNVMGYGLIAIKGTQLTLIQFGVIHLSKYTDHAIKLSKIFERISLLIEEYHPDEMAIEAPFFGSNVQSMLKLGRAQGVAIAAAISKQVPIFEYAPKKIKQSVTGSGNASKEQVAAMLSKILFFQEIPKLLDATDALGVAVCHYFQKGDVKKSKGGWNNFIKENPDKVKTVPAKISKKKTD</sequence>
<feature type="chain" id="PRO_0000332415" description="Crossover junction endodeoxyribonuclease RuvC">
    <location>
        <begin position="1"/>
        <end position="200"/>
    </location>
</feature>
<feature type="active site" evidence="1">
    <location>
        <position position="18"/>
    </location>
</feature>
<feature type="active site" evidence="1">
    <location>
        <position position="78"/>
    </location>
</feature>
<feature type="active site" evidence="1">
    <location>
        <position position="151"/>
    </location>
</feature>
<feature type="binding site" evidence="1">
    <location>
        <position position="18"/>
    </location>
    <ligand>
        <name>Mg(2+)</name>
        <dbReference type="ChEBI" id="CHEBI:18420"/>
        <label>1</label>
    </ligand>
</feature>
<feature type="binding site" evidence="1">
    <location>
        <position position="78"/>
    </location>
    <ligand>
        <name>Mg(2+)</name>
        <dbReference type="ChEBI" id="CHEBI:18420"/>
        <label>2</label>
    </ligand>
</feature>
<feature type="binding site" evidence="1">
    <location>
        <position position="151"/>
    </location>
    <ligand>
        <name>Mg(2+)</name>
        <dbReference type="ChEBI" id="CHEBI:18420"/>
        <label>1</label>
    </ligand>
</feature>
<protein>
    <recommendedName>
        <fullName evidence="1">Crossover junction endodeoxyribonuclease RuvC</fullName>
        <ecNumber evidence="1">3.1.21.10</ecNumber>
    </recommendedName>
    <alternativeName>
        <fullName evidence="1">Holliday junction nuclease RuvC</fullName>
    </alternativeName>
    <alternativeName>
        <fullName evidence="1">Holliday junction resolvase RuvC</fullName>
    </alternativeName>
</protein>
<organism>
    <name type="scientific">Cytophaga hutchinsonii (strain ATCC 33406 / DSM 1761 / CIP 103989 / NBRC 15051 / NCIMB 9469 / D465)</name>
    <dbReference type="NCBI Taxonomy" id="269798"/>
    <lineage>
        <taxon>Bacteria</taxon>
        <taxon>Pseudomonadati</taxon>
        <taxon>Bacteroidota</taxon>
        <taxon>Cytophagia</taxon>
        <taxon>Cytophagales</taxon>
        <taxon>Cytophagaceae</taxon>
        <taxon>Cytophaga</taxon>
    </lineage>
</organism>
<keyword id="KW-0963">Cytoplasm</keyword>
<keyword id="KW-0227">DNA damage</keyword>
<keyword id="KW-0233">DNA recombination</keyword>
<keyword id="KW-0234">DNA repair</keyword>
<keyword id="KW-0238">DNA-binding</keyword>
<keyword id="KW-0255">Endonuclease</keyword>
<keyword id="KW-0378">Hydrolase</keyword>
<keyword id="KW-0460">Magnesium</keyword>
<keyword id="KW-0479">Metal-binding</keyword>
<keyword id="KW-0540">Nuclease</keyword>
<keyword id="KW-1185">Reference proteome</keyword>
<dbReference type="EC" id="3.1.21.10" evidence="1"/>
<dbReference type="EMBL" id="CP000383">
    <property type="protein sequence ID" value="ABG59446.1"/>
    <property type="molecule type" value="Genomic_DNA"/>
</dbReference>
<dbReference type="RefSeq" id="WP_011585564.1">
    <property type="nucleotide sequence ID" value="NC_008255.1"/>
</dbReference>
<dbReference type="SMR" id="Q11T17"/>
<dbReference type="STRING" id="269798.CHU_2183"/>
<dbReference type="KEGG" id="chu:CHU_2183"/>
<dbReference type="eggNOG" id="COG0817">
    <property type="taxonomic scope" value="Bacteria"/>
</dbReference>
<dbReference type="HOGENOM" id="CLU_091257_3_0_10"/>
<dbReference type="OrthoDB" id="9805499at2"/>
<dbReference type="Proteomes" id="UP000001822">
    <property type="component" value="Chromosome"/>
</dbReference>
<dbReference type="GO" id="GO:0005737">
    <property type="term" value="C:cytoplasm"/>
    <property type="evidence" value="ECO:0007669"/>
    <property type="project" value="UniProtKB-SubCell"/>
</dbReference>
<dbReference type="GO" id="GO:0048476">
    <property type="term" value="C:Holliday junction resolvase complex"/>
    <property type="evidence" value="ECO:0007669"/>
    <property type="project" value="UniProtKB-UniRule"/>
</dbReference>
<dbReference type="GO" id="GO:0008821">
    <property type="term" value="F:crossover junction DNA endonuclease activity"/>
    <property type="evidence" value="ECO:0007669"/>
    <property type="project" value="UniProtKB-UniRule"/>
</dbReference>
<dbReference type="GO" id="GO:0003677">
    <property type="term" value="F:DNA binding"/>
    <property type="evidence" value="ECO:0007669"/>
    <property type="project" value="UniProtKB-KW"/>
</dbReference>
<dbReference type="GO" id="GO:0000287">
    <property type="term" value="F:magnesium ion binding"/>
    <property type="evidence" value="ECO:0007669"/>
    <property type="project" value="UniProtKB-UniRule"/>
</dbReference>
<dbReference type="GO" id="GO:0006310">
    <property type="term" value="P:DNA recombination"/>
    <property type="evidence" value="ECO:0007669"/>
    <property type="project" value="UniProtKB-UniRule"/>
</dbReference>
<dbReference type="GO" id="GO:0006281">
    <property type="term" value="P:DNA repair"/>
    <property type="evidence" value="ECO:0007669"/>
    <property type="project" value="UniProtKB-UniRule"/>
</dbReference>
<dbReference type="CDD" id="cd16962">
    <property type="entry name" value="RuvC"/>
    <property type="match status" value="1"/>
</dbReference>
<dbReference type="FunFam" id="3.30.420.10:FF:000002">
    <property type="entry name" value="Crossover junction endodeoxyribonuclease RuvC"/>
    <property type="match status" value="1"/>
</dbReference>
<dbReference type="Gene3D" id="3.30.420.10">
    <property type="entry name" value="Ribonuclease H-like superfamily/Ribonuclease H"/>
    <property type="match status" value="1"/>
</dbReference>
<dbReference type="HAMAP" id="MF_00034">
    <property type="entry name" value="RuvC"/>
    <property type="match status" value="1"/>
</dbReference>
<dbReference type="InterPro" id="IPR012337">
    <property type="entry name" value="RNaseH-like_sf"/>
</dbReference>
<dbReference type="InterPro" id="IPR036397">
    <property type="entry name" value="RNaseH_sf"/>
</dbReference>
<dbReference type="InterPro" id="IPR020563">
    <property type="entry name" value="X-over_junc_endoDNase_Mg_BS"/>
</dbReference>
<dbReference type="InterPro" id="IPR002176">
    <property type="entry name" value="X-over_junc_endoDNase_RuvC"/>
</dbReference>
<dbReference type="NCBIfam" id="TIGR00228">
    <property type="entry name" value="ruvC"/>
    <property type="match status" value="1"/>
</dbReference>
<dbReference type="PANTHER" id="PTHR30194">
    <property type="entry name" value="CROSSOVER JUNCTION ENDODEOXYRIBONUCLEASE RUVC"/>
    <property type="match status" value="1"/>
</dbReference>
<dbReference type="PANTHER" id="PTHR30194:SF3">
    <property type="entry name" value="CROSSOVER JUNCTION ENDODEOXYRIBONUCLEASE RUVC"/>
    <property type="match status" value="1"/>
</dbReference>
<dbReference type="Pfam" id="PF02075">
    <property type="entry name" value="RuvC"/>
    <property type="match status" value="1"/>
</dbReference>
<dbReference type="PRINTS" id="PR00696">
    <property type="entry name" value="RSOLVASERUVC"/>
</dbReference>
<dbReference type="SUPFAM" id="SSF53098">
    <property type="entry name" value="Ribonuclease H-like"/>
    <property type="match status" value="1"/>
</dbReference>
<dbReference type="PROSITE" id="PS01321">
    <property type="entry name" value="RUVC"/>
    <property type="match status" value="1"/>
</dbReference>